<sequence>MKFIDESLIRIEAGDGGNGCVSFRREKFIPKGGPDGGDGGDGGDVYLQADENLNTLIDYRFNKRFAAERGENGRSSDCTGRRGKDIILPVPVGTRAIDNDTKETLGDLTQHGQKMLVAKGGYHGLGNTRFKSSVNRAPRQKTMGTPGEKRDLLLELMLLADVGMLGFPNAGKSTFIRAVSAAKPKVADYPFTTLVPSLGVVKVDDSHSFVVADIPGLIEGAADGAGLGIRFLKHLERCRVLIHLVDIAPIDGSNPADNVAIIESELFQYSEKLSEKPRWLVFNKIDTMSDEEAEERVREITEQLGWEEDYYLISAATGKNVPPLCRDIMDFIIANPREAETQQVAPEEVKFKWEDYHQEQLAEYQFDDDEDWDDDWTEEDDDEDWDDDWTEEDDEGIEFIYKP</sequence>
<evidence type="ECO:0000255" key="1">
    <source>
        <dbReference type="HAMAP-Rule" id="MF_01454"/>
    </source>
</evidence>
<evidence type="ECO:0000255" key="2">
    <source>
        <dbReference type="PROSITE-ProRule" id="PRU01231"/>
    </source>
</evidence>
<evidence type="ECO:0000256" key="3">
    <source>
        <dbReference type="SAM" id="MobiDB-lite"/>
    </source>
</evidence>
<protein>
    <recommendedName>
        <fullName evidence="1">GTPase Obg</fullName>
        <ecNumber evidence="1">3.6.5.-</ecNumber>
    </recommendedName>
    <alternativeName>
        <fullName evidence="1">GTP-binding protein Obg</fullName>
    </alternativeName>
</protein>
<feature type="chain" id="PRO_0000385963" description="GTPase Obg">
    <location>
        <begin position="1"/>
        <end position="403"/>
    </location>
</feature>
<feature type="domain" description="Obg" evidence="2">
    <location>
        <begin position="1"/>
        <end position="159"/>
    </location>
</feature>
<feature type="domain" description="OBG-type G" evidence="1">
    <location>
        <begin position="160"/>
        <end position="333"/>
    </location>
</feature>
<feature type="region of interest" description="Disordered" evidence="3">
    <location>
        <begin position="363"/>
        <end position="403"/>
    </location>
</feature>
<feature type="compositionally biased region" description="Acidic residues" evidence="3">
    <location>
        <begin position="365"/>
        <end position="397"/>
    </location>
</feature>
<feature type="binding site" evidence="1">
    <location>
        <begin position="166"/>
        <end position="173"/>
    </location>
    <ligand>
        <name>GTP</name>
        <dbReference type="ChEBI" id="CHEBI:37565"/>
    </ligand>
</feature>
<feature type="binding site" evidence="1">
    <location>
        <position position="173"/>
    </location>
    <ligand>
        <name>Mg(2+)</name>
        <dbReference type="ChEBI" id="CHEBI:18420"/>
    </ligand>
</feature>
<feature type="binding site" evidence="1">
    <location>
        <begin position="191"/>
        <end position="195"/>
    </location>
    <ligand>
        <name>GTP</name>
        <dbReference type="ChEBI" id="CHEBI:37565"/>
    </ligand>
</feature>
<feature type="binding site" evidence="1">
    <location>
        <position position="193"/>
    </location>
    <ligand>
        <name>Mg(2+)</name>
        <dbReference type="ChEBI" id="CHEBI:18420"/>
    </ligand>
</feature>
<feature type="binding site" evidence="1">
    <location>
        <begin position="213"/>
        <end position="216"/>
    </location>
    <ligand>
        <name>GTP</name>
        <dbReference type="ChEBI" id="CHEBI:37565"/>
    </ligand>
</feature>
<feature type="binding site" evidence="1">
    <location>
        <begin position="283"/>
        <end position="286"/>
    </location>
    <ligand>
        <name>GTP</name>
        <dbReference type="ChEBI" id="CHEBI:37565"/>
    </ligand>
</feature>
<feature type="binding site" evidence="1">
    <location>
        <begin position="314"/>
        <end position="316"/>
    </location>
    <ligand>
        <name>GTP</name>
        <dbReference type="ChEBI" id="CHEBI:37565"/>
    </ligand>
</feature>
<accession>A5UDJ7</accession>
<dbReference type="EC" id="3.6.5.-" evidence="1"/>
<dbReference type="EMBL" id="CP000671">
    <property type="protein sequence ID" value="ABQ98848.1"/>
    <property type="molecule type" value="Genomic_DNA"/>
</dbReference>
<dbReference type="SMR" id="A5UDJ7"/>
<dbReference type="KEGG" id="hip:CGSHiEE_07645"/>
<dbReference type="HOGENOM" id="CLU_011747_2_0_6"/>
<dbReference type="GO" id="GO:0005737">
    <property type="term" value="C:cytoplasm"/>
    <property type="evidence" value="ECO:0007669"/>
    <property type="project" value="UniProtKB-SubCell"/>
</dbReference>
<dbReference type="GO" id="GO:0005525">
    <property type="term" value="F:GTP binding"/>
    <property type="evidence" value="ECO:0007669"/>
    <property type="project" value="UniProtKB-UniRule"/>
</dbReference>
<dbReference type="GO" id="GO:0003924">
    <property type="term" value="F:GTPase activity"/>
    <property type="evidence" value="ECO:0007669"/>
    <property type="project" value="UniProtKB-UniRule"/>
</dbReference>
<dbReference type="GO" id="GO:0000287">
    <property type="term" value="F:magnesium ion binding"/>
    <property type="evidence" value="ECO:0007669"/>
    <property type="project" value="InterPro"/>
</dbReference>
<dbReference type="GO" id="GO:0042254">
    <property type="term" value="P:ribosome biogenesis"/>
    <property type="evidence" value="ECO:0007669"/>
    <property type="project" value="UniProtKB-UniRule"/>
</dbReference>
<dbReference type="CDD" id="cd01898">
    <property type="entry name" value="Obg"/>
    <property type="match status" value="1"/>
</dbReference>
<dbReference type="FunFam" id="2.70.210.12:FF:000001">
    <property type="entry name" value="GTPase Obg"/>
    <property type="match status" value="1"/>
</dbReference>
<dbReference type="FunFam" id="3.40.50.300:FF:000185">
    <property type="entry name" value="GTPase Obg"/>
    <property type="match status" value="1"/>
</dbReference>
<dbReference type="Gene3D" id="2.70.210.12">
    <property type="entry name" value="GTP1/OBG domain"/>
    <property type="match status" value="1"/>
</dbReference>
<dbReference type="Gene3D" id="3.40.50.300">
    <property type="entry name" value="P-loop containing nucleotide triphosphate hydrolases"/>
    <property type="match status" value="1"/>
</dbReference>
<dbReference type="HAMAP" id="MF_01454">
    <property type="entry name" value="GTPase_Obg"/>
    <property type="match status" value="1"/>
</dbReference>
<dbReference type="InterPro" id="IPR031167">
    <property type="entry name" value="G_OBG"/>
</dbReference>
<dbReference type="InterPro" id="IPR006073">
    <property type="entry name" value="GTP-bd"/>
</dbReference>
<dbReference type="InterPro" id="IPR014100">
    <property type="entry name" value="GTP-bd_Obg/CgtA"/>
</dbReference>
<dbReference type="InterPro" id="IPR006074">
    <property type="entry name" value="GTP1-OBG_CS"/>
</dbReference>
<dbReference type="InterPro" id="IPR006169">
    <property type="entry name" value="GTP1_OBG_dom"/>
</dbReference>
<dbReference type="InterPro" id="IPR036726">
    <property type="entry name" value="GTP1_OBG_dom_sf"/>
</dbReference>
<dbReference type="InterPro" id="IPR045086">
    <property type="entry name" value="OBG_GTPase"/>
</dbReference>
<dbReference type="InterPro" id="IPR027417">
    <property type="entry name" value="P-loop_NTPase"/>
</dbReference>
<dbReference type="NCBIfam" id="TIGR02729">
    <property type="entry name" value="Obg_CgtA"/>
    <property type="match status" value="1"/>
</dbReference>
<dbReference type="NCBIfam" id="NF008955">
    <property type="entry name" value="PRK12297.1"/>
    <property type="match status" value="1"/>
</dbReference>
<dbReference type="NCBIfam" id="NF008956">
    <property type="entry name" value="PRK12299.1"/>
    <property type="match status" value="1"/>
</dbReference>
<dbReference type="PANTHER" id="PTHR11702">
    <property type="entry name" value="DEVELOPMENTALLY REGULATED GTP-BINDING PROTEIN-RELATED"/>
    <property type="match status" value="1"/>
</dbReference>
<dbReference type="PANTHER" id="PTHR11702:SF31">
    <property type="entry name" value="MITOCHONDRIAL RIBOSOME-ASSOCIATED GTPASE 2"/>
    <property type="match status" value="1"/>
</dbReference>
<dbReference type="Pfam" id="PF01018">
    <property type="entry name" value="GTP1_OBG"/>
    <property type="match status" value="1"/>
</dbReference>
<dbReference type="Pfam" id="PF01926">
    <property type="entry name" value="MMR_HSR1"/>
    <property type="match status" value="1"/>
</dbReference>
<dbReference type="PIRSF" id="PIRSF002401">
    <property type="entry name" value="GTP_bd_Obg/CgtA"/>
    <property type="match status" value="1"/>
</dbReference>
<dbReference type="PRINTS" id="PR00326">
    <property type="entry name" value="GTP1OBG"/>
</dbReference>
<dbReference type="SUPFAM" id="SSF82051">
    <property type="entry name" value="Obg GTP-binding protein N-terminal domain"/>
    <property type="match status" value="1"/>
</dbReference>
<dbReference type="SUPFAM" id="SSF52540">
    <property type="entry name" value="P-loop containing nucleoside triphosphate hydrolases"/>
    <property type="match status" value="1"/>
</dbReference>
<dbReference type="PROSITE" id="PS51710">
    <property type="entry name" value="G_OBG"/>
    <property type="match status" value="1"/>
</dbReference>
<dbReference type="PROSITE" id="PS00905">
    <property type="entry name" value="GTP1_OBG"/>
    <property type="match status" value="1"/>
</dbReference>
<dbReference type="PROSITE" id="PS51883">
    <property type="entry name" value="OBG"/>
    <property type="match status" value="1"/>
</dbReference>
<proteinExistence type="inferred from homology"/>
<gene>
    <name evidence="1" type="primary">obg</name>
    <name type="ordered locus">CGSHiEE_07645</name>
</gene>
<organism>
    <name type="scientific">Haemophilus influenzae (strain PittEE)</name>
    <dbReference type="NCBI Taxonomy" id="374930"/>
    <lineage>
        <taxon>Bacteria</taxon>
        <taxon>Pseudomonadati</taxon>
        <taxon>Pseudomonadota</taxon>
        <taxon>Gammaproteobacteria</taxon>
        <taxon>Pasteurellales</taxon>
        <taxon>Pasteurellaceae</taxon>
        <taxon>Haemophilus</taxon>
    </lineage>
</organism>
<comment type="function">
    <text evidence="1">An essential GTPase which binds GTP, GDP and possibly (p)ppGpp with moderate affinity, with high nucleotide exchange rates and a fairly low GTP hydrolysis rate. Plays a role in control of the cell cycle, stress response, ribosome biogenesis and in those bacteria that undergo differentiation, in morphogenesis control.</text>
</comment>
<comment type="cofactor">
    <cofactor evidence="1">
        <name>Mg(2+)</name>
        <dbReference type="ChEBI" id="CHEBI:18420"/>
    </cofactor>
</comment>
<comment type="subunit">
    <text evidence="1">Monomer.</text>
</comment>
<comment type="subcellular location">
    <subcellularLocation>
        <location evidence="1">Cytoplasm</location>
    </subcellularLocation>
</comment>
<comment type="similarity">
    <text evidence="1">Belongs to the TRAFAC class OBG-HflX-like GTPase superfamily. OBG GTPase family.</text>
</comment>
<reference key="1">
    <citation type="journal article" date="2007" name="Genome Biol.">
        <title>Characterization and modeling of the Haemophilus influenzae core and supragenomes based on the complete genomic sequences of Rd and 12 clinical nontypeable strains.</title>
        <authorList>
            <person name="Hogg J.S."/>
            <person name="Hu F.Z."/>
            <person name="Janto B."/>
            <person name="Boissy R."/>
            <person name="Hayes J."/>
            <person name="Keefe R."/>
            <person name="Post J.C."/>
            <person name="Ehrlich G.D."/>
        </authorList>
    </citation>
    <scope>NUCLEOTIDE SEQUENCE [LARGE SCALE GENOMIC DNA]</scope>
    <source>
        <strain>PittEE</strain>
    </source>
</reference>
<name>OBG_HAEIE</name>
<keyword id="KW-0963">Cytoplasm</keyword>
<keyword id="KW-0342">GTP-binding</keyword>
<keyword id="KW-0378">Hydrolase</keyword>
<keyword id="KW-0460">Magnesium</keyword>
<keyword id="KW-0479">Metal-binding</keyword>
<keyword id="KW-0547">Nucleotide-binding</keyword>